<proteinExistence type="inferred from homology"/>
<gene>
    <name evidence="1" type="primary">lepA</name>
    <name type="ordered locus">SDY_2810</name>
</gene>
<organism>
    <name type="scientific">Shigella dysenteriae serotype 1 (strain Sd197)</name>
    <dbReference type="NCBI Taxonomy" id="300267"/>
    <lineage>
        <taxon>Bacteria</taxon>
        <taxon>Pseudomonadati</taxon>
        <taxon>Pseudomonadota</taxon>
        <taxon>Gammaproteobacteria</taxon>
        <taxon>Enterobacterales</taxon>
        <taxon>Enterobacteriaceae</taxon>
        <taxon>Shigella</taxon>
    </lineage>
</organism>
<comment type="function">
    <text evidence="1">Required for accurate and efficient protein synthesis under certain stress conditions. May act as a fidelity factor of the translation reaction, by catalyzing a one-codon backward translocation of tRNAs on improperly translocated ribosomes. Back-translocation proceeds from a post-translocation (POST) complex to a pre-translocation (PRE) complex, thus giving elongation factor G a second chance to translocate the tRNAs correctly. Binds to ribosomes in a GTP-dependent manner.</text>
</comment>
<comment type="catalytic activity">
    <reaction evidence="1">
        <text>GTP + H2O = GDP + phosphate + H(+)</text>
        <dbReference type="Rhea" id="RHEA:19669"/>
        <dbReference type="ChEBI" id="CHEBI:15377"/>
        <dbReference type="ChEBI" id="CHEBI:15378"/>
        <dbReference type="ChEBI" id="CHEBI:37565"/>
        <dbReference type="ChEBI" id="CHEBI:43474"/>
        <dbReference type="ChEBI" id="CHEBI:58189"/>
        <dbReference type="EC" id="3.6.5.n1"/>
    </reaction>
</comment>
<comment type="subcellular location">
    <subcellularLocation>
        <location evidence="1">Cell inner membrane</location>
        <topology evidence="1">Peripheral membrane protein</topology>
        <orientation evidence="1">Cytoplasmic side</orientation>
    </subcellularLocation>
</comment>
<comment type="similarity">
    <text evidence="1">Belongs to the TRAFAC class translation factor GTPase superfamily. Classic translation factor GTPase family. LepA subfamily.</text>
</comment>
<name>LEPA_SHIDS</name>
<sequence>MKNIRNFSIIAHIDHGKSTLSDRIIQICGGLSDREMEAQVLDSMDLERERGITIKAQSVTLDYKASDGETYQLNFIDTPGHVDFSYEVSRSLAACEGALLVVDAGQGVEAQTLANCYTAMEMDLEVVPVLNKIDLPAADPERVAEEIEDIVGIDATDAVRCSAKTGVGVQDVLERLVRDIPPPEGDPEGPLQALIIDSWFDNYLGVVSLIRIKNGTLRKGDKVKVMSTGQTYNADRLGIFTPKQVDRTELKCGEVGWLVCAIKDIHGAPVGDTLTLARNPAEKVLPGFKKVKPQVYAGLFPVSSDDYEAFRDALGKLSLNDASLFYEPESSSALGFGFRCGFLGLLHMEIIQERLEREYDLDLITTAPTVVYEVETTSREVIYVDSPSKLPAVNNIYELREPIAECHMLLPQAYLGNVITLCVEKRGVQTNMVYHGNQVALTYEIPMAEVVLDFFDRLKSTSRGYASLDYNFKRFQASDMVRVDVLINGERVDALALITHRDNSQNRGRELVEKMKDLIPRQQFDIAIQAAIGTHIIARSTVKQLRKNVLAKCYGGDISRKKKLLQKQKEGKKRMKQIGNVELPQEAFLAILHVGKDNK</sequence>
<dbReference type="EC" id="3.6.5.n1" evidence="1"/>
<dbReference type="EMBL" id="CP000034">
    <property type="protein sequence ID" value="ABB62853.1"/>
    <property type="molecule type" value="Genomic_DNA"/>
</dbReference>
<dbReference type="RefSeq" id="WP_000790175.1">
    <property type="nucleotide sequence ID" value="NC_007606.1"/>
</dbReference>
<dbReference type="RefSeq" id="YP_404344.1">
    <property type="nucleotide sequence ID" value="NC_007606.1"/>
</dbReference>
<dbReference type="SMR" id="Q32CV2"/>
<dbReference type="STRING" id="300267.SDY_2810"/>
<dbReference type="EnsemblBacteria" id="ABB62853">
    <property type="protein sequence ID" value="ABB62853"/>
    <property type="gene ID" value="SDY_2810"/>
</dbReference>
<dbReference type="KEGG" id="sdy:SDY_2810"/>
<dbReference type="PATRIC" id="fig|300267.13.peg.3385"/>
<dbReference type="HOGENOM" id="CLU_009995_3_3_6"/>
<dbReference type="Proteomes" id="UP000002716">
    <property type="component" value="Chromosome"/>
</dbReference>
<dbReference type="GO" id="GO:0005886">
    <property type="term" value="C:plasma membrane"/>
    <property type="evidence" value="ECO:0007669"/>
    <property type="project" value="UniProtKB-SubCell"/>
</dbReference>
<dbReference type="GO" id="GO:0005525">
    <property type="term" value="F:GTP binding"/>
    <property type="evidence" value="ECO:0007669"/>
    <property type="project" value="UniProtKB-UniRule"/>
</dbReference>
<dbReference type="GO" id="GO:0003924">
    <property type="term" value="F:GTPase activity"/>
    <property type="evidence" value="ECO:0007669"/>
    <property type="project" value="UniProtKB-UniRule"/>
</dbReference>
<dbReference type="GO" id="GO:0097216">
    <property type="term" value="F:guanosine tetraphosphate binding"/>
    <property type="evidence" value="ECO:0007669"/>
    <property type="project" value="UniProtKB-ARBA"/>
</dbReference>
<dbReference type="GO" id="GO:0043022">
    <property type="term" value="F:ribosome binding"/>
    <property type="evidence" value="ECO:0007669"/>
    <property type="project" value="UniProtKB-UniRule"/>
</dbReference>
<dbReference type="GO" id="GO:0003746">
    <property type="term" value="F:translation elongation factor activity"/>
    <property type="evidence" value="ECO:0007669"/>
    <property type="project" value="UniProtKB-UniRule"/>
</dbReference>
<dbReference type="GO" id="GO:0045727">
    <property type="term" value="P:positive regulation of translation"/>
    <property type="evidence" value="ECO:0007669"/>
    <property type="project" value="UniProtKB-UniRule"/>
</dbReference>
<dbReference type="CDD" id="cd03699">
    <property type="entry name" value="EF4_II"/>
    <property type="match status" value="1"/>
</dbReference>
<dbReference type="CDD" id="cd16260">
    <property type="entry name" value="EF4_III"/>
    <property type="match status" value="1"/>
</dbReference>
<dbReference type="CDD" id="cd01890">
    <property type="entry name" value="LepA"/>
    <property type="match status" value="1"/>
</dbReference>
<dbReference type="CDD" id="cd03709">
    <property type="entry name" value="lepA_C"/>
    <property type="match status" value="1"/>
</dbReference>
<dbReference type="FunFam" id="3.30.70.240:FF:000005">
    <property type="entry name" value="Elongation factor 4"/>
    <property type="match status" value="1"/>
</dbReference>
<dbReference type="FunFam" id="3.40.50.300:FF:000078">
    <property type="entry name" value="Elongation factor 4"/>
    <property type="match status" value="1"/>
</dbReference>
<dbReference type="FunFam" id="2.40.30.10:FF:000015">
    <property type="entry name" value="Translation factor GUF1, mitochondrial"/>
    <property type="match status" value="1"/>
</dbReference>
<dbReference type="FunFam" id="3.30.70.2570:FF:000001">
    <property type="entry name" value="Translation factor GUF1, mitochondrial"/>
    <property type="match status" value="1"/>
</dbReference>
<dbReference type="FunFam" id="3.30.70.870:FF:000004">
    <property type="entry name" value="Translation factor GUF1, mitochondrial"/>
    <property type="match status" value="1"/>
</dbReference>
<dbReference type="Gene3D" id="3.30.70.240">
    <property type="match status" value="1"/>
</dbReference>
<dbReference type="Gene3D" id="3.30.70.2570">
    <property type="entry name" value="Elongation factor 4, C-terminal domain"/>
    <property type="match status" value="1"/>
</dbReference>
<dbReference type="Gene3D" id="3.30.70.870">
    <property type="entry name" value="Elongation Factor G (Translational Gtpase), domain 3"/>
    <property type="match status" value="1"/>
</dbReference>
<dbReference type="Gene3D" id="3.40.50.300">
    <property type="entry name" value="P-loop containing nucleotide triphosphate hydrolases"/>
    <property type="match status" value="1"/>
</dbReference>
<dbReference type="Gene3D" id="2.40.30.10">
    <property type="entry name" value="Translation factors"/>
    <property type="match status" value="1"/>
</dbReference>
<dbReference type="HAMAP" id="MF_00071">
    <property type="entry name" value="LepA"/>
    <property type="match status" value="1"/>
</dbReference>
<dbReference type="InterPro" id="IPR006297">
    <property type="entry name" value="EF-4"/>
</dbReference>
<dbReference type="InterPro" id="IPR035647">
    <property type="entry name" value="EFG_III/V"/>
</dbReference>
<dbReference type="InterPro" id="IPR000640">
    <property type="entry name" value="EFG_V-like"/>
</dbReference>
<dbReference type="InterPro" id="IPR004161">
    <property type="entry name" value="EFTu-like_2"/>
</dbReference>
<dbReference type="InterPro" id="IPR031157">
    <property type="entry name" value="G_TR_CS"/>
</dbReference>
<dbReference type="InterPro" id="IPR038363">
    <property type="entry name" value="LepA_C_sf"/>
</dbReference>
<dbReference type="InterPro" id="IPR013842">
    <property type="entry name" value="LepA_CTD"/>
</dbReference>
<dbReference type="InterPro" id="IPR035654">
    <property type="entry name" value="LepA_IV"/>
</dbReference>
<dbReference type="InterPro" id="IPR027417">
    <property type="entry name" value="P-loop_NTPase"/>
</dbReference>
<dbReference type="InterPro" id="IPR005225">
    <property type="entry name" value="Small_GTP-bd"/>
</dbReference>
<dbReference type="InterPro" id="IPR000795">
    <property type="entry name" value="T_Tr_GTP-bd_dom"/>
</dbReference>
<dbReference type="NCBIfam" id="TIGR01393">
    <property type="entry name" value="lepA"/>
    <property type="match status" value="1"/>
</dbReference>
<dbReference type="NCBIfam" id="TIGR00231">
    <property type="entry name" value="small_GTP"/>
    <property type="match status" value="1"/>
</dbReference>
<dbReference type="PANTHER" id="PTHR43512:SF4">
    <property type="entry name" value="TRANSLATION FACTOR GUF1 HOMOLOG, CHLOROPLASTIC"/>
    <property type="match status" value="1"/>
</dbReference>
<dbReference type="PANTHER" id="PTHR43512">
    <property type="entry name" value="TRANSLATION FACTOR GUF1-RELATED"/>
    <property type="match status" value="1"/>
</dbReference>
<dbReference type="Pfam" id="PF00679">
    <property type="entry name" value="EFG_C"/>
    <property type="match status" value="1"/>
</dbReference>
<dbReference type="Pfam" id="PF00009">
    <property type="entry name" value="GTP_EFTU"/>
    <property type="match status" value="1"/>
</dbReference>
<dbReference type="Pfam" id="PF03144">
    <property type="entry name" value="GTP_EFTU_D2"/>
    <property type="match status" value="1"/>
</dbReference>
<dbReference type="Pfam" id="PF06421">
    <property type="entry name" value="LepA_C"/>
    <property type="match status" value="1"/>
</dbReference>
<dbReference type="PRINTS" id="PR00315">
    <property type="entry name" value="ELONGATNFCT"/>
</dbReference>
<dbReference type="SUPFAM" id="SSF54980">
    <property type="entry name" value="EF-G C-terminal domain-like"/>
    <property type="match status" value="2"/>
</dbReference>
<dbReference type="SUPFAM" id="SSF52540">
    <property type="entry name" value="P-loop containing nucleoside triphosphate hydrolases"/>
    <property type="match status" value="1"/>
</dbReference>
<dbReference type="PROSITE" id="PS00301">
    <property type="entry name" value="G_TR_1"/>
    <property type="match status" value="1"/>
</dbReference>
<dbReference type="PROSITE" id="PS51722">
    <property type="entry name" value="G_TR_2"/>
    <property type="match status" value="1"/>
</dbReference>
<reference key="1">
    <citation type="journal article" date="2005" name="Nucleic Acids Res.">
        <title>Genome dynamics and diversity of Shigella species, the etiologic agents of bacillary dysentery.</title>
        <authorList>
            <person name="Yang F."/>
            <person name="Yang J."/>
            <person name="Zhang X."/>
            <person name="Chen L."/>
            <person name="Jiang Y."/>
            <person name="Yan Y."/>
            <person name="Tang X."/>
            <person name="Wang J."/>
            <person name="Xiong Z."/>
            <person name="Dong J."/>
            <person name="Xue Y."/>
            <person name="Zhu Y."/>
            <person name="Xu X."/>
            <person name="Sun L."/>
            <person name="Chen S."/>
            <person name="Nie H."/>
            <person name="Peng J."/>
            <person name="Xu J."/>
            <person name="Wang Y."/>
            <person name="Yuan Z."/>
            <person name="Wen Y."/>
            <person name="Yao Z."/>
            <person name="Shen Y."/>
            <person name="Qiang B."/>
            <person name="Hou Y."/>
            <person name="Yu J."/>
            <person name="Jin Q."/>
        </authorList>
    </citation>
    <scope>NUCLEOTIDE SEQUENCE [LARGE SCALE GENOMIC DNA]</scope>
    <source>
        <strain>Sd197</strain>
    </source>
</reference>
<protein>
    <recommendedName>
        <fullName evidence="1">Elongation factor 4</fullName>
        <shortName evidence="1">EF-4</shortName>
        <ecNumber evidence="1">3.6.5.n1</ecNumber>
    </recommendedName>
    <alternativeName>
        <fullName evidence="1">Ribosomal back-translocase LepA</fullName>
    </alternativeName>
</protein>
<keyword id="KW-0997">Cell inner membrane</keyword>
<keyword id="KW-1003">Cell membrane</keyword>
<keyword id="KW-0342">GTP-binding</keyword>
<keyword id="KW-0378">Hydrolase</keyword>
<keyword id="KW-0472">Membrane</keyword>
<keyword id="KW-0547">Nucleotide-binding</keyword>
<keyword id="KW-0648">Protein biosynthesis</keyword>
<keyword id="KW-1185">Reference proteome</keyword>
<evidence type="ECO:0000255" key="1">
    <source>
        <dbReference type="HAMAP-Rule" id="MF_00071"/>
    </source>
</evidence>
<accession>Q32CV2</accession>
<feature type="chain" id="PRO_0000224795" description="Elongation factor 4">
    <location>
        <begin position="1"/>
        <end position="599"/>
    </location>
</feature>
<feature type="domain" description="tr-type G">
    <location>
        <begin position="2"/>
        <end position="184"/>
    </location>
</feature>
<feature type="binding site" evidence="1">
    <location>
        <begin position="14"/>
        <end position="19"/>
    </location>
    <ligand>
        <name>GTP</name>
        <dbReference type="ChEBI" id="CHEBI:37565"/>
    </ligand>
</feature>
<feature type="binding site" evidence="1">
    <location>
        <begin position="131"/>
        <end position="134"/>
    </location>
    <ligand>
        <name>GTP</name>
        <dbReference type="ChEBI" id="CHEBI:37565"/>
    </ligand>
</feature>